<name>UREE_HELPG</name>
<proteinExistence type="inferred from homology"/>
<organism>
    <name type="scientific">Helicobacter pylori (strain G27)</name>
    <dbReference type="NCBI Taxonomy" id="563041"/>
    <lineage>
        <taxon>Bacteria</taxon>
        <taxon>Pseudomonadati</taxon>
        <taxon>Campylobacterota</taxon>
        <taxon>Epsilonproteobacteria</taxon>
        <taxon>Campylobacterales</taxon>
        <taxon>Helicobacteraceae</taxon>
        <taxon>Helicobacter</taxon>
    </lineage>
</organism>
<sequence>MIIERLVGNLRDLNPLDFSVDYVDLEWFETRKKIARFKTRQGKDIAIRLKDAPKLGLSQGDILFKEEKEIIAVNILDSEVIHIQAKSVAEVAKICYEIGNRHAALYYGESQFEFKTPFEKPTLALLEKLGVQNRVLSSKLDSKERLTVSMPHSEPNFKVSLASDFKVVMK</sequence>
<dbReference type="EMBL" id="CP001173">
    <property type="protein sequence ID" value="ACI26836.1"/>
    <property type="molecule type" value="Genomic_DNA"/>
</dbReference>
<dbReference type="RefSeq" id="WP_000583100.1">
    <property type="nucleotide sequence ID" value="NC_011333.1"/>
</dbReference>
<dbReference type="SMR" id="B5Z672"/>
<dbReference type="KEGG" id="hpg:HPG27_65"/>
<dbReference type="HOGENOM" id="CLU_093757_3_0_7"/>
<dbReference type="Proteomes" id="UP000001735">
    <property type="component" value="Chromosome"/>
</dbReference>
<dbReference type="GO" id="GO:0005737">
    <property type="term" value="C:cytoplasm"/>
    <property type="evidence" value="ECO:0007669"/>
    <property type="project" value="UniProtKB-SubCell"/>
</dbReference>
<dbReference type="GO" id="GO:0016151">
    <property type="term" value="F:nickel cation binding"/>
    <property type="evidence" value="ECO:0007669"/>
    <property type="project" value="UniProtKB-UniRule"/>
</dbReference>
<dbReference type="GO" id="GO:0051082">
    <property type="term" value="F:unfolded protein binding"/>
    <property type="evidence" value="ECO:0007669"/>
    <property type="project" value="UniProtKB-UniRule"/>
</dbReference>
<dbReference type="GO" id="GO:0006457">
    <property type="term" value="P:protein folding"/>
    <property type="evidence" value="ECO:0007669"/>
    <property type="project" value="InterPro"/>
</dbReference>
<dbReference type="GO" id="GO:0065003">
    <property type="term" value="P:protein-containing complex assembly"/>
    <property type="evidence" value="ECO:0007669"/>
    <property type="project" value="InterPro"/>
</dbReference>
<dbReference type="GO" id="GO:0019627">
    <property type="term" value="P:urea metabolic process"/>
    <property type="evidence" value="ECO:0007669"/>
    <property type="project" value="InterPro"/>
</dbReference>
<dbReference type="CDD" id="cd00571">
    <property type="entry name" value="UreE"/>
    <property type="match status" value="1"/>
</dbReference>
<dbReference type="Gene3D" id="2.60.260.20">
    <property type="entry name" value="Urease metallochaperone UreE, N-terminal domain"/>
    <property type="match status" value="1"/>
</dbReference>
<dbReference type="Gene3D" id="3.30.70.790">
    <property type="entry name" value="UreE, C-terminal domain"/>
    <property type="match status" value="1"/>
</dbReference>
<dbReference type="HAMAP" id="MF_00822">
    <property type="entry name" value="UreE"/>
    <property type="match status" value="1"/>
</dbReference>
<dbReference type="InterPro" id="IPR012406">
    <property type="entry name" value="UreE"/>
</dbReference>
<dbReference type="InterPro" id="IPR007864">
    <property type="entry name" value="UreE_C_dom"/>
</dbReference>
<dbReference type="InterPro" id="IPR004029">
    <property type="entry name" value="UreE_N"/>
</dbReference>
<dbReference type="InterPro" id="IPR036118">
    <property type="entry name" value="UreE_N_sf"/>
</dbReference>
<dbReference type="NCBIfam" id="NF009754">
    <property type="entry name" value="PRK13261.1-6"/>
    <property type="match status" value="1"/>
</dbReference>
<dbReference type="Pfam" id="PF05194">
    <property type="entry name" value="UreE_C"/>
    <property type="match status" value="1"/>
</dbReference>
<dbReference type="Pfam" id="PF02814">
    <property type="entry name" value="UreE_N"/>
    <property type="match status" value="1"/>
</dbReference>
<dbReference type="PIRSF" id="PIRSF036402">
    <property type="entry name" value="Ureas_acces_UreE"/>
    <property type="match status" value="1"/>
</dbReference>
<dbReference type="SMART" id="SM00988">
    <property type="entry name" value="UreE_N"/>
    <property type="match status" value="1"/>
</dbReference>
<dbReference type="SUPFAM" id="SSF69737">
    <property type="entry name" value="Urease metallochaperone UreE, C-terminal domain"/>
    <property type="match status" value="1"/>
</dbReference>
<dbReference type="SUPFAM" id="SSF69287">
    <property type="entry name" value="Urease metallochaperone UreE, N-terminal domain"/>
    <property type="match status" value="1"/>
</dbReference>
<reference key="1">
    <citation type="journal article" date="2009" name="J. Bacteriol.">
        <title>The complete genome sequence of Helicobacter pylori strain G27.</title>
        <authorList>
            <person name="Baltrus D.A."/>
            <person name="Amieva M.R."/>
            <person name="Covacci A."/>
            <person name="Lowe T.M."/>
            <person name="Merrell D.S."/>
            <person name="Ottemann K.M."/>
            <person name="Stein M."/>
            <person name="Salama N.R."/>
            <person name="Guillemin K."/>
        </authorList>
    </citation>
    <scope>NUCLEOTIDE SEQUENCE [LARGE SCALE GENOMIC DNA]</scope>
    <source>
        <strain>G27</strain>
    </source>
</reference>
<accession>B5Z672</accession>
<keyword id="KW-0143">Chaperone</keyword>
<keyword id="KW-0963">Cytoplasm</keyword>
<keyword id="KW-0533">Nickel</keyword>
<keyword id="KW-1185">Reference proteome</keyword>
<gene>
    <name evidence="1" type="primary">ureE</name>
    <name type="ordered locus">HPG27_65</name>
</gene>
<evidence type="ECO:0000255" key="1">
    <source>
        <dbReference type="HAMAP-Rule" id="MF_00822"/>
    </source>
</evidence>
<comment type="function">
    <text evidence="1">Involved in urease metallocenter assembly. Binds nickel. Probably functions as a nickel donor during metallocenter assembly.</text>
</comment>
<comment type="subcellular location">
    <subcellularLocation>
        <location evidence="1">Cytoplasm</location>
    </subcellularLocation>
</comment>
<comment type="similarity">
    <text evidence="1">Belongs to the UreE family.</text>
</comment>
<feature type="chain" id="PRO_1000197437" description="Urease accessory protein UreE">
    <location>
        <begin position="1"/>
        <end position="170"/>
    </location>
</feature>
<protein>
    <recommendedName>
        <fullName evidence="1">Urease accessory protein UreE</fullName>
    </recommendedName>
</protein>